<organism>
    <name type="scientific">Streptococcus pneumoniae (strain ATCC BAA-255 / R6)</name>
    <dbReference type="NCBI Taxonomy" id="171101"/>
    <lineage>
        <taxon>Bacteria</taxon>
        <taxon>Bacillati</taxon>
        <taxon>Bacillota</taxon>
        <taxon>Bacilli</taxon>
        <taxon>Lactobacillales</taxon>
        <taxon>Streptococcaceae</taxon>
        <taxon>Streptococcus</taxon>
    </lineage>
</organism>
<evidence type="ECO:0000255" key="1">
    <source>
        <dbReference type="HAMAP-Rule" id="MF_00228"/>
    </source>
</evidence>
<keyword id="KW-0067">ATP-binding</keyword>
<keyword id="KW-0418">Kinase</keyword>
<keyword id="KW-0460">Magnesium</keyword>
<keyword id="KW-0479">Metal-binding</keyword>
<keyword id="KW-0547">Nucleotide-binding</keyword>
<keyword id="KW-1185">Reference proteome</keyword>
<keyword id="KW-0784">Thiamine biosynthesis</keyword>
<keyword id="KW-0808">Transferase</keyword>
<feature type="chain" id="PRO_0000383899" description="Hydroxyethylthiazole kinase 2">
    <location>
        <begin position="1"/>
        <end position="267"/>
    </location>
</feature>
<feature type="binding site" evidence="1">
    <location>
        <position position="41"/>
    </location>
    <ligand>
        <name>substrate</name>
    </ligand>
</feature>
<feature type="binding site" evidence="1">
    <location>
        <position position="116"/>
    </location>
    <ligand>
        <name>ATP</name>
        <dbReference type="ChEBI" id="CHEBI:30616"/>
    </ligand>
</feature>
<feature type="binding site" evidence="1">
    <location>
        <position position="166"/>
    </location>
    <ligand>
        <name>ATP</name>
        <dbReference type="ChEBI" id="CHEBI:30616"/>
    </ligand>
</feature>
<feature type="binding site" evidence="1">
    <location>
        <position position="193"/>
    </location>
    <ligand>
        <name>substrate</name>
    </ligand>
</feature>
<name>THIM2_STRR6</name>
<sequence>MQEFTNPFPIGSSSLIHCITNEISCEMLANGILALGCKPVMADDSREVLDFTKQSQALFINLGHLSAEKEKAIRMAASYANQSSLPMVVDAVGVTTSSIRKSLVKDLLDYRPTVLKGNMSEIRSLVGLKHHGVGVDASAKDQETEDLLQVLKDWCQTYPGMSFLVTGPKDLVVSKNQVAVLGNGCTELDWITGTGDLVGALTAVFLSQGKTGFEASCLAVSYLNIAAEKIVVQGMGLEEFRYQVLNQLSLLRRDENWLDTIKGEVYE</sequence>
<comment type="function">
    <text evidence="1">Catalyzes the phosphorylation of the hydroxyl group of 4-methyl-5-beta-hydroxyethylthiazole (THZ).</text>
</comment>
<comment type="catalytic activity">
    <reaction evidence="1">
        <text>5-(2-hydroxyethyl)-4-methylthiazole + ATP = 4-methyl-5-(2-phosphooxyethyl)-thiazole + ADP + H(+)</text>
        <dbReference type="Rhea" id="RHEA:24212"/>
        <dbReference type="ChEBI" id="CHEBI:15378"/>
        <dbReference type="ChEBI" id="CHEBI:17957"/>
        <dbReference type="ChEBI" id="CHEBI:30616"/>
        <dbReference type="ChEBI" id="CHEBI:58296"/>
        <dbReference type="ChEBI" id="CHEBI:456216"/>
        <dbReference type="EC" id="2.7.1.50"/>
    </reaction>
</comment>
<comment type="cofactor">
    <cofactor evidence="1">
        <name>Mg(2+)</name>
        <dbReference type="ChEBI" id="CHEBI:18420"/>
    </cofactor>
</comment>
<comment type="pathway">
    <text evidence="1">Cofactor biosynthesis; thiamine diphosphate biosynthesis; 4-methyl-5-(2-phosphoethyl)-thiazole from 5-(2-hydroxyethyl)-4-methylthiazole: step 1/1.</text>
</comment>
<comment type="similarity">
    <text evidence="1">Belongs to the Thz kinase family.</text>
</comment>
<protein>
    <recommendedName>
        <fullName evidence="1">Hydroxyethylthiazole kinase 2</fullName>
        <ecNumber evidence="1">2.7.1.50</ecNumber>
    </recommendedName>
    <alternativeName>
        <fullName evidence="1">4-methyl-5-beta-hydroxyethylthiazole kinase 2</fullName>
        <shortName evidence="1">TH kinase 2</shortName>
        <shortName evidence="1">Thz kinase 2</shortName>
    </alternativeName>
</protein>
<proteinExistence type="inferred from homology"/>
<dbReference type="EC" id="2.7.1.50" evidence="1"/>
<dbReference type="EMBL" id="AE007317">
    <property type="protein sequence ID" value="AAK99440.1"/>
    <property type="molecule type" value="Genomic_DNA"/>
</dbReference>
<dbReference type="PIR" id="D97951">
    <property type="entry name" value="D97951"/>
</dbReference>
<dbReference type="PIR" id="H95083">
    <property type="entry name" value="H95083"/>
</dbReference>
<dbReference type="RefSeq" id="NP_358230.1">
    <property type="nucleotide sequence ID" value="NC_003098.1"/>
</dbReference>
<dbReference type="RefSeq" id="WP_001155185.1">
    <property type="nucleotide sequence ID" value="NC_003098.1"/>
</dbReference>
<dbReference type="SMR" id="Q8DQJ9"/>
<dbReference type="STRING" id="171101.spr0636"/>
<dbReference type="KEGG" id="spr:spr0636"/>
<dbReference type="PATRIC" id="fig|171101.6.peg.707"/>
<dbReference type="eggNOG" id="COG2145">
    <property type="taxonomic scope" value="Bacteria"/>
</dbReference>
<dbReference type="HOGENOM" id="CLU_019943_0_0_9"/>
<dbReference type="UniPathway" id="UPA00060">
    <property type="reaction ID" value="UER00139"/>
</dbReference>
<dbReference type="Proteomes" id="UP000000586">
    <property type="component" value="Chromosome"/>
</dbReference>
<dbReference type="GO" id="GO:0005524">
    <property type="term" value="F:ATP binding"/>
    <property type="evidence" value="ECO:0007669"/>
    <property type="project" value="UniProtKB-UniRule"/>
</dbReference>
<dbReference type="GO" id="GO:0004417">
    <property type="term" value="F:hydroxyethylthiazole kinase activity"/>
    <property type="evidence" value="ECO:0007669"/>
    <property type="project" value="UniProtKB-UniRule"/>
</dbReference>
<dbReference type="GO" id="GO:0000287">
    <property type="term" value="F:magnesium ion binding"/>
    <property type="evidence" value="ECO:0007669"/>
    <property type="project" value="UniProtKB-UniRule"/>
</dbReference>
<dbReference type="GO" id="GO:0009228">
    <property type="term" value="P:thiamine biosynthetic process"/>
    <property type="evidence" value="ECO:0007669"/>
    <property type="project" value="UniProtKB-KW"/>
</dbReference>
<dbReference type="GO" id="GO:0009229">
    <property type="term" value="P:thiamine diphosphate biosynthetic process"/>
    <property type="evidence" value="ECO:0007669"/>
    <property type="project" value="UniProtKB-UniRule"/>
</dbReference>
<dbReference type="CDD" id="cd01170">
    <property type="entry name" value="THZ_kinase"/>
    <property type="match status" value="1"/>
</dbReference>
<dbReference type="Gene3D" id="3.40.1190.20">
    <property type="match status" value="1"/>
</dbReference>
<dbReference type="HAMAP" id="MF_00228">
    <property type="entry name" value="Thz_kinase"/>
    <property type="match status" value="1"/>
</dbReference>
<dbReference type="InterPro" id="IPR000417">
    <property type="entry name" value="Hyethyz_kinase"/>
</dbReference>
<dbReference type="InterPro" id="IPR029056">
    <property type="entry name" value="Ribokinase-like"/>
</dbReference>
<dbReference type="Pfam" id="PF02110">
    <property type="entry name" value="HK"/>
    <property type="match status" value="1"/>
</dbReference>
<dbReference type="PIRSF" id="PIRSF000513">
    <property type="entry name" value="Thz_kinase"/>
    <property type="match status" value="1"/>
</dbReference>
<dbReference type="PRINTS" id="PR01099">
    <property type="entry name" value="HYETHTZKNASE"/>
</dbReference>
<dbReference type="SUPFAM" id="SSF53613">
    <property type="entry name" value="Ribokinase-like"/>
    <property type="match status" value="1"/>
</dbReference>
<gene>
    <name evidence="1" type="primary">thiM2</name>
    <name type="ordered locus">spr0636</name>
</gene>
<reference key="1">
    <citation type="journal article" date="2001" name="J. Bacteriol.">
        <title>Genome of the bacterium Streptococcus pneumoniae strain R6.</title>
        <authorList>
            <person name="Hoskins J."/>
            <person name="Alborn W.E. Jr."/>
            <person name="Arnold J."/>
            <person name="Blaszczak L.C."/>
            <person name="Burgett S."/>
            <person name="DeHoff B.S."/>
            <person name="Estrem S.T."/>
            <person name="Fritz L."/>
            <person name="Fu D.-J."/>
            <person name="Fuller W."/>
            <person name="Geringer C."/>
            <person name="Gilmour R."/>
            <person name="Glass J.S."/>
            <person name="Khoja H."/>
            <person name="Kraft A.R."/>
            <person name="Lagace R.E."/>
            <person name="LeBlanc D.J."/>
            <person name="Lee L.N."/>
            <person name="Lefkowitz E.J."/>
            <person name="Lu J."/>
            <person name="Matsushima P."/>
            <person name="McAhren S.M."/>
            <person name="McHenney M."/>
            <person name="McLeaster K."/>
            <person name="Mundy C.W."/>
            <person name="Nicas T.I."/>
            <person name="Norris F.H."/>
            <person name="O'Gara M."/>
            <person name="Peery R.B."/>
            <person name="Robertson G.T."/>
            <person name="Rockey P."/>
            <person name="Sun P.-M."/>
            <person name="Winkler M.E."/>
            <person name="Yang Y."/>
            <person name="Young-Bellido M."/>
            <person name="Zhao G."/>
            <person name="Zook C.A."/>
            <person name="Baltz R.H."/>
            <person name="Jaskunas S.R."/>
            <person name="Rosteck P.R. Jr."/>
            <person name="Skatrud P.L."/>
            <person name="Glass J.I."/>
        </authorList>
    </citation>
    <scope>NUCLEOTIDE SEQUENCE [LARGE SCALE GENOMIC DNA]</scope>
    <source>
        <strain>ATCC BAA-255 / R6</strain>
    </source>
</reference>
<accession>Q8DQJ9</accession>